<gene>
    <name evidence="1" type="primary">yaaI</name>
    <name type="ordered locus">SSPA0010</name>
</gene>
<feature type="signal peptide" evidence="1">
    <location>
        <begin position="1"/>
        <end position="23"/>
    </location>
</feature>
<feature type="chain" id="PRO_1000144745" description="UPF0412 protein YaaI">
    <location>
        <begin position="24"/>
        <end position="134"/>
    </location>
</feature>
<comment type="similarity">
    <text evidence="1">Belongs to the UPF0412 family.</text>
</comment>
<protein>
    <recommendedName>
        <fullName evidence="1">UPF0412 protein YaaI</fullName>
    </recommendedName>
</protein>
<sequence length="134" mass="14435">MRSVLTISVGLLFGLALSSVAHANDHKILGVIAMPRNETNDLALKIPVCRIVKRIQLTADHGDIELSGASVYFKTARSASQSLNVPSSIKEGQTTGWININSDNDNKRCVSKITFSGHTVNSSDMARLKVIGDD</sequence>
<dbReference type="EMBL" id="FM200053">
    <property type="protein sequence ID" value="CAR58118.1"/>
    <property type="molecule type" value="Genomic_DNA"/>
</dbReference>
<dbReference type="RefSeq" id="WP_001258093.1">
    <property type="nucleotide sequence ID" value="NC_011147.1"/>
</dbReference>
<dbReference type="KEGG" id="sek:SSPA0010"/>
<dbReference type="HOGENOM" id="CLU_158661_0_0_6"/>
<dbReference type="Proteomes" id="UP000001869">
    <property type="component" value="Chromosome"/>
</dbReference>
<dbReference type="HAMAP" id="MF_01372">
    <property type="entry name" value="UPF0412"/>
    <property type="match status" value="1"/>
</dbReference>
<dbReference type="InterPro" id="IPR020240">
    <property type="entry name" value="UPF0412_YaaI"/>
</dbReference>
<dbReference type="NCBIfam" id="NF007541">
    <property type="entry name" value="PRK10154.1"/>
    <property type="match status" value="1"/>
</dbReference>
<dbReference type="Pfam" id="PF10807">
    <property type="entry name" value="DUF2541"/>
    <property type="match status" value="1"/>
</dbReference>
<proteinExistence type="inferred from homology"/>
<reference key="1">
    <citation type="journal article" date="2009" name="BMC Genomics">
        <title>Pseudogene accumulation in the evolutionary histories of Salmonella enterica serovars Paratyphi A and Typhi.</title>
        <authorList>
            <person name="Holt K.E."/>
            <person name="Thomson N.R."/>
            <person name="Wain J."/>
            <person name="Langridge G.C."/>
            <person name="Hasan R."/>
            <person name="Bhutta Z.A."/>
            <person name="Quail M.A."/>
            <person name="Norbertczak H."/>
            <person name="Walker D."/>
            <person name="Simmonds M."/>
            <person name="White B."/>
            <person name="Bason N."/>
            <person name="Mungall K."/>
            <person name="Dougan G."/>
            <person name="Parkhill J."/>
        </authorList>
    </citation>
    <scope>NUCLEOTIDE SEQUENCE [LARGE SCALE GENOMIC DNA]</scope>
    <source>
        <strain>AKU_12601</strain>
    </source>
</reference>
<accession>B5BLH7</accession>
<organism>
    <name type="scientific">Salmonella paratyphi A (strain AKU_12601)</name>
    <dbReference type="NCBI Taxonomy" id="554290"/>
    <lineage>
        <taxon>Bacteria</taxon>
        <taxon>Pseudomonadati</taxon>
        <taxon>Pseudomonadota</taxon>
        <taxon>Gammaproteobacteria</taxon>
        <taxon>Enterobacterales</taxon>
        <taxon>Enterobacteriaceae</taxon>
        <taxon>Salmonella</taxon>
    </lineage>
</organism>
<evidence type="ECO:0000255" key="1">
    <source>
        <dbReference type="HAMAP-Rule" id="MF_01372"/>
    </source>
</evidence>
<name>YAAI_SALPK</name>
<keyword id="KW-0732">Signal</keyword>